<organism>
    <name type="scientific">Mus musculus</name>
    <name type="common">Mouse</name>
    <dbReference type="NCBI Taxonomy" id="10090"/>
    <lineage>
        <taxon>Eukaryota</taxon>
        <taxon>Metazoa</taxon>
        <taxon>Chordata</taxon>
        <taxon>Craniata</taxon>
        <taxon>Vertebrata</taxon>
        <taxon>Euteleostomi</taxon>
        <taxon>Mammalia</taxon>
        <taxon>Eutheria</taxon>
        <taxon>Euarchontoglires</taxon>
        <taxon>Glires</taxon>
        <taxon>Rodentia</taxon>
        <taxon>Myomorpha</taxon>
        <taxon>Muroidea</taxon>
        <taxon>Muridae</taxon>
        <taxon>Murinae</taxon>
        <taxon>Mus</taxon>
        <taxon>Mus</taxon>
    </lineage>
</organism>
<protein>
    <recommendedName>
        <fullName>H/ACA ribonucleoprotein complex subunit 1</fullName>
    </recommendedName>
    <alternativeName>
        <fullName>Nucleolar protein family A member 1</fullName>
    </alternativeName>
    <alternativeName>
        <fullName>snoRNP protein GAR1</fullName>
    </alternativeName>
</protein>
<feature type="chain" id="PRO_0000208553" description="H/ACA ribonucleoprotein complex subunit 1">
    <location>
        <begin position="1"/>
        <end position="231"/>
    </location>
</feature>
<feature type="region of interest" description="Disordered" evidence="3">
    <location>
        <begin position="1"/>
        <end position="75"/>
    </location>
</feature>
<feature type="region of interest" description="RGG-box 1">
    <location>
        <begin position="4"/>
        <end position="68"/>
    </location>
</feature>
<feature type="region of interest" description="Disordered" evidence="3">
    <location>
        <begin position="167"/>
        <end position="231"/>
    </location>
</feature>
<feature type="region of interest" description="RGG-box 2">
    <location>
        <begin position="180"/>
        <end position="231"/>
    </location>
</feature>
<feature type="compositionally biased region" description="Gly residues" evidence="3">
    <location>
        <begin position="1"/>
        <end position="68"/>
    </location>
</feature>
<feature type="compositionally biased region" description="Gly residues" evidence="3">
    <location>
        <begin position="179"/>
        <end position="231"/>
    </location>
</feature>
<feature type="cross-link" description="Glycyl lysine isopeptide (Lys-Gly) (interchain with G-Cter in SUMO2)" evidence="2">
    <location>
        <position position="145"/>
    </location>
</feature>
<feature type="splice variant" id="VSP_011426" description="In isoform 3." evidence="4">
    <location>
        <begin position="26"/>
        <end position="37"/>
    </location>
</feature>
<feature type="splice variant" id="VSP_011427" description="In isoform 2 and isoform 3." evidence="4">
    <location>
        <begin position="49"/>
        <end position="50"/>
    </location>
</feature>
<feature type="sequence conflict" description="In Ref. 1; BAC36056." evidence="5" ref="1">
    <original>F</original>
    <variation>L</variation>
    <location>
        <position position="52"/>
    </location>
</feature>
<dbReference type="EMBL" id="AK021256">
    <property type="protein sequence ID" value="BAB32351.1"/>
    <property type="molecule type" value="mRNA"/>
</dbReference>
<dbReference type="EMBL" id="AK075923">
    <property type="protein sequence ID" value="BAC36056.1"/>
    <property type="molecule type" value="mRNA"/>
</dbReference>
<dbReference type="EMBL" id="BC021873">
    <property type="protein sequence ID" value="AAH21873.1"/>
    <property type="molecule type" value="mRNA"/>
</dbReference>
<dbReference type="EMBL" id="BC048685">
    <property type="protein sequence ID" value="AAH48685.1"/>
    <property type="molecule type" value="mRNA"/>
</dbReference>
<dbReference type="CCDS" id="CCDS38634.1">
    <molecule id="Q9CY66-1"/>
</dbReference>
<dbReference type="RefSeq" id="NP_001416017.1">
    <molecule id="Q9CY66-1"/>
    <property type="nucleotide sequence ID" value="NM_001429088.1"/>
</dbReference>
<dbReference type="RefSeq" id="NP_080854.1">
    <molecule id="Q9CY66-1"/>
    <property type="nucleotide sequence ID" value="NM_026578.4"/>
</dbReference>
<dbReference type="RefSeq" id="XP_011238510.1">
    <property type="nucleotide sequence ID" value="XM_011240208.2"/>
</dbReference>
<dbReference type="SMR" id="Q9CY66"/>
<dbReference type="BioGRID" id="212682">
    <property type="interactions" value="29"/>
</dbReference>
<dbReference type="ComplexPortal" id="CPX-1124">
    <property type="entry name" value="Telomerase holoenzyme complex"/>
</dbReference>
<dbReference type="FunCoup" id="Q9CY66">
    <property type="interactions" value="2034"/>
</dbReference>
<dbReference type="IntAct" id="Q9CY66">
    <property type="interactions" value="3"/>
</dbReference>
<dbReference type="MINT" id="Q9CY66"/>
<dbReference type="STRING" id="10090.ENSMUSP00000029643"/>
<dbReference type="iPTMnet" id="Q9CY66"/>
<dbReference type="PhosphoSitePlus" id="Q9CY66"/>
<dbReference type="jPOST" id="Q9CY66"/>
<dbReference type="PaxDb" id="10090-ENSMUSP00000029643"/>
<dbReference type="ProteomicsDB" id="273028">
    <molecule id="Q9CY66-1"/>
</dbReference>
<dbReference type="ProteomicsDB" id="273029">
    <molecule id="Q9CY66-2"/>
</dbReference>
<dbReference type="ProteomicsDB" id="273030">
    <molecule id="Q9CY66-3"/>
</dbReference>
<dbReference type="Pumba" id="Q9CY66"/>
<dbReference type="Antibodypedia" id="26373">
    <property type="antibodies" value="131 antibodies from 25 providers"/>
</dbReference>
<dbReference type="DNASU" id="68147"/>
<dbReference type="Ensembl" id="ENSMUST00000029643.15">
    <molecule id="Q9CY66-1"/>
    <property type="protein sequence ID" value="ENSMUSP00000029643.9"/>
    <property type="gene ID" value="ENSMUSG00000028010.17"/>
</dbReference>
<dbReference type="GeneID" id="68147"/>
<dbReference type="KEGG" id="mmu:68147"/>
<dbReference type="UCSC" id="uc008rim.2">
    <molecule id="Q9CY66-1"/>
    <property type="organism name" value="mouse"/>
</dbReference>
<dbReference type="AGR" id="MGI:1930948"/>
<dbReference type="CTD" id="54433"/>
<dbReference type="MGI" id="MGI:1930948">
    <property type="gene designation" value="Gar1"/>
</dbReference>
<dbReference type="VEuPathDB" id="HostDB:ENSMUSG00000028010"/>
<dbReference type="eggNOG" id="KOG3262">
    <property type="taxonomic scope" value="Eukaryota"/>
</dbReference>
<dbReference type="GeneTree" id="ENSGT00730000111223"/>
<dbReference type="HOGENOM" id="CLU_080002_0_1_1"/>
<dbReference type="InParanoid" id="Q9CY66"/>
<dbReference type="OMA" id="KPQDGIV"/>
<dbReference type="OrthoDB" id="2187159at2759"/>
<dbReference type="PhylomeDB" id="Q9CY66"/>
<dbReference type="TreeFam" id="TF350747"/>
<dbReference type="Reactome" id="R-MMU-171319">
    <property type="pathway name" value="Telomere Extension By Telomerase"/>
</dbReference>
<dbReference type="BioGRID-ORCS" id="68147">
    <property type="hits" value="22 hits in 79 CRISPR screens"/>
</dbReference>
<dbReference type="ChiTaRS" id="Gar1">
    <property type="organism name" value="mouse"/>
</dbReference>
<dbReference type="PRO" id="PR:Q9CY66"/>
<dbReference type="Proteomes" id="UP000000589">
    <property type="component" value="Chromosome 3"/>
</dbReference>
<dbReference type="RNAct" id="Q9CY66">
    <property type="molecule type" value="protein"/>
</dbReference>
<dbReference type="Bgee" id="ENSMUSG00000028010">
    <property type="expression patterns" value="Expressed in ileal epithelium and 270 other cell types or tissues"/>
</dbReference>
<dbReference type="ExpressionAtlas" id="Q9CY66">
    <property type="expression patterns" value="baseline and differential"/>
</dbReference>
<dbReference type="GO" id="GO:0031429">
    <property type="term" value="C:box H/ACA snoRNP complex"/>
    <property type="evidence" value="ECO:0007669"/>
    <property type="project" value="Ensembl"/>
</dbReference>
<dbReference type="GO" id="GO:0090661">
    <property type="term" value="C:box H/ACA telomerase RNP complex"/>
    <property type="evidence" value="ECO:0007669"/>
    <property type="project" value="Ensembl"/>
</dbReference>
<dbReference type="GO" id="GO:0015030">
    <property type="term" value="C:Cajal body"/>
    <property type="evidence" value="ECO:0007669"/>
    <property type="project" value="UniProtKB-SubCell"/>
</dbReference>
<dbReference type="GO" id="GO:0000781">
    <property type="term" value="C:chromosome, telomeric region"/>
    <property type="evidence" value="ECO:0007669"/>
    <property type="project" value="Ensembl"/>
</dbReference>
<dbReference type="GO" id="GO:0001651">
    <property type="term" value="C:dense fibrillar component"/>
    <property type="evidence" value="ECO:0000266"/>
    <property type="project" value="MGI"/>
</dbReference>
<dbReference type="GO" id="GO:0001650">
    <property type="term" value="C:fibrillar center"/>
    <property type="evidence" value="ECO:0007669"/>
    <property type="project" value="Ensembl"/>
</dbReference>
<dbReference type="GO" id="GO:0005697">
    <property type="term" value="C:telomerase holoenzyme complex"/>
    <property type="evidence" value="ECO:0000250"/>
    <property type="project" value="UniProtKB"/>
</dbReference>
<dbReference type="GO" id="GO:0034513">
    <property type="term" value="F:box H/ACA snoRNA binding"/>
    <property type="evidence" value="ECO:0007669"/>
    <property type="project" value="Ensembl"/>
</dbReference>
<dbReference type="GO" id="GO:0030515">
    <property type="term" value="F:snoRNA binding"/>
    <property type="evidence" value="ECO:0000266"/>
    <property type="project" value="MGI"/>
</dbReference>
<dbReference type="GO" id="GO:0070034">
    <property type="term" value="F:telomerase RNA binding"/>
    <property type="evidence" value="ECO:0007669"/>
    <property type="project" value="Ensembl"/>
</dbReference>
<dbReference type="GO" id="GO:0001522">
    <property type="term" value="P:pseudouridine synthesis"/>
    <property type="evidence" value="ECO:0007669"/>
    <property type="project" value="InterPro"/>
</dbReference>
<dbReference type="GO" id="GO:0006364">
    <property type="term" value="P:rRNA processing"/>
    <property type="evidence" value="ECO:0007669"/>
    <property type="project" value="UniProtKB-KW"/>
</dbReference>
<dbReference type="GO" id="GO:0007004">
    <property type="term" value="P:telomere maintenance via telomerase"/>
    <property type="evidence" value="ECO:0000250"/>
    <property type="project" value="UniProtKB"/>
</dbReference>
<dbReference type="FunFam" id="2.40.10.230:FF:000001">
    <property type="entry name" value="H/ACA ribonucleoprotein complex subunit"/>
    <property type="match status" value="1"/>
</dbReference>
<dbReference type="Gene3D" id="2.40.10.230">
    <property type="entry name" value="Probable tRNA pseudouridine synthase domain"/>
    <property type="match status" value="1"/>
</dbReference>
<dbReference type="InterPro" id="IPR038664">
    <property type="entry name" value="Gar1/Naf1_Cbf5-bd_sf"/>
</dbReference>
<dbReference type="InterPro" id="IPR007504">
    <property type="entry name" value="H/ACA_rnp_Gar1/Naf1"/>
</dbReference>
<dbReference type="InterPro" id="IPR009000">
    <property type="entry name" value="Transl_B-barrel_sf"/>
</dbReference>
<dbReference type="PANTHER" id="PTHR23237:SF6">
    <property type="entry name" value="H_ACA RIBONUCLEOPROTEIN COMPLEX SUBUNIT 1"/>
    <property type="match status" value="1"/>
</dbReference>
<dbReference type="PANTHER" id="PTHR23237">
    <property type="entry name" value="NUCLEOLAR PROTEIN FAMILY A MEMBER 1 SNORNP PROTEIN GAR1"/>
    <property type="match status" value="1"/>
</dbReference>
<dbReference type="Pfam" id="PF04410">
    <property type="entry name" value="Gar1"/>
    <property type="match status" value="1"/>
</dbReference>
<dbReference type="SUPFAM" id="SSF50447">
    <property type="entry name" value="Translation proteins"/>
    <property type="match status" value="1"/>
</dbReference>
<reference key="1">
    <citation type="journal article" date="2005" name="Science">
        <title>The transcriptional landscape of the mammalian genome.</title>
        <authorList>
            <person name="Carninci P."/>
            <person name="Kasukawa T."/>
            <person name="Katayama S."/>
            <person name="Gough J."/>
            <person name="Frith M.C."/>
            <person name="Maeda N."/>
            <person name="Oyama R."/>
            <person name="Ravasi T."/>
            <person name="Lenhard B."/>
            <person name="Wells C."/>
            <person name="Kodzius R."/>
            <person name="Shimokawa K."/>
            <person name="Bajic V.B."/>
            <person name="Brenner S.E."/>
            <person name="Batalov S."/>
            <person name="Forrest A.R."/>
            <person name="Zavolan M."/>
            <person name="Davis M.J."/>
            <person name="Wilming L.G."/>
            <person name="Aidinis V."/>
            <person name="Allen J.E."/>
            <person name="Ambesi-Impiombato A."/>
            <person name="Apweiler R."/>
            <person name="Aturaliya R.N."/>
            <person name="Bailey T.L."/>
            <person name="Bansal M."/>
            <person name="Baxter L."/>
            <person name="Beisel K.W."/>
            <person name="Bersano T."/>
            <person name="Bono H."/>
            <person name="Chalk A.M."/>
            <person name="Chiu K.P."/>
            <person name="Choudhary V."/>
            <person name="Christoffels A."/>
            <person name="Clutterbuck D.R."/>
            <person name="Crowe M.L."/>
            <person name="Dalla E."/>
            <person name="Dalrymple B.P."/>
            <person name="de Bono B."/>
            <person name="Della Gatta G."/>
            <person name="di Bernardo D."/>
            <person name="Down T."/>
            <person name="Engstrom P."/>
            <person name="Fagiolini M."/>
            <person name="Faulkner G."/>
            <person name="Fletcher C.F."/>
            <person name="Fukushima T."/>
            <person name="Furuno M."/>
            <person name="Futaki S."/>
            <person name="Gariboldi M."/>
            <person name="Georgii-Hemming P."/>
            <person name="Gingeras T.R."/>
            <person name="Gojobori T."/>
            <person name="Green R.E."/>
            <person name="Gustincich S."/>
            <person name="Harbers M."/>
            <person name="Hayashi Y."/>
            <person name="Hensch T.K."/>
            <person name="Hirokawa N."/>
            <person name="Hill D."/>
            <person name="Huminiecki L."/>
            <person name="Iacono M."/>
            <person name="Ikeo K."/>
            <person name="Iwama A."/>
            <person name="Ishikawa T."/>
            <person name="Jakt M."/>
            <person name="Kanapin A."/>
            <person name="Katoh M."/>
            <person name="Kawasawa Y."/>
            <person name="Kelso J."/>
            <person name="Kitamura H."/>
            <person name="Kitano H."/>
            <person name="Kollias G."/>
            <person name="Krishnan S.P."/>
            <person name="Kruger A."/>
            <person name="Kummerfeld S.K."/>
            <person name="Kurochkin I.V."/>
            <person name="Lareau L.F."/>
            <person name="Lazarevic D."/>
            <person name="Lipovich L."/>
            <person name="Liu J."/>
            <person name="Liuni S."/>
            <person name="McWilliam S."/>
            <person name="Madan Babu M."/>
            <person name="Madera M."/>
            <person name="Marchionni L."/>
            <person name="Matsuda H."/>
            <person name="Matsuzawa S."/>
            <person name="Miki H."/>
            <person name="Mignone F."/>
            <person name="Miyake S."/>
            <person name="Morris K."/>
            <person name="Mottagui-Tabar S."/>
            <person name="Mulder N."/>
            <person name="Nakano N."/>
            <person name="Nakauchi H."/>
            <person name="Ng P."/>
            <person name="Nilsson R."/>
            <person name="Nishiguchi S."/>
            <person name="Nishikawa S."/>
            <person name="Nori F."/>
            <person name="Ohara O."/>
            <person name="Okazaki Y."/>
            <person name="Orlando V."/>
            <person name="Pang K.C."/>
            <person name="Pavan W.J."/>
            <person name="Pavesi G."/>
            <person name="Pesole G."/>
            <person name="Petrovsky N."/>
            <person name="Piazza S."/>
            <person name="Reed J."/>
            <person name="Reid J.F."/>
            <person name="Ring B.Z."/>
            <person name="Ringwald M."/>
            <person name="Rost B."/>
            <person name="Ruan Y."/>
            <person name="Salzberg S.L."/>
            <person name="Sandelin A."/>
            <person name="Schneider C."/>
            <person name="Schoenbach C."/>
            <person name="Sekiguchi K."/>
            <person name="Semple C.A."/>
            <person name="Seno S."/>
            <person name="Sessa L."/>
            <person name="Sheng Y."/>
            <person name="Shibata Y."/>
            <person name="Shimada H."/>
            <person name="Shimada K."/>
            <person name="Silva D."/>
            <person name="Sinclair B."/>
            <person name="Sperling S."/>
            <person name="Stupka E."/>
            <person name="Sugiura K."/>
            <person name="Sultana R."/>
            <person name="Takenaka Y."/>
            <person name="Taki K."/>
            <person name="Tammoja K."/>
            <person name="Tan S.L."/>
            <person name="Tang S."/>
            <person name="Taylor M.S."/>
            <person name="Tegner J."/>
            <person name="Teichmann S.A."/>
            <person name="Ueda H.R."/>
            <person name="van Nimwegen E."/>
            <person name="Verardo R."/>
            <person name="Wei C.L."/>
            <person name="Yagi K."/>
            <person name="Yamanishi H."/>
            <person name="Zabarovsky E."/>
            <person name="Zhu S."/>
            <person name="Zimmer A."/>
            <person name="Hide W."/>
            <person name="Bult C."/>
            <person name="Grimmond S.M."/>
            <person name="Teasdale R.D."/>
            <person name="Liu E.T."/>
            <person name="Brusic V."/>
            <person name="Quackenbush J."/>
            <person name="Wahlestedt C."/>
            <person name="Mattick J.S."/>
            <person name="Hume D.A."/>
            <person name="Kai C."/>
            <person name="Sasaki D."/>
            <person name="Tomaru Y."/>
            <person name="Fukuda S."/>
            <person name="Kanamori-Katayama M."/>
            <person name="Suzuki M."/>
            <person name="Aoki J."/>
            <person name="Arakawa T."/>
            <person name="Iida J."/>
            <person name="Imamura K."/>
            <person name="Itoh M."/>
            <person name="Kato T."/>
            <person name="Kawaji H."/>
            <person name="Kawagashira N."/>
            <person name="Kawashima T."/>
            <person name="Kojima M."/>
            <person name="Kondo S."/>
            <person name="Konno H."/>
            <person name="Nakano K."/>
            <person name="Ninomiya N."/>
            <person name="Nishio T."/>
            <person name="Okada M."/>
            <person name="Plessy C."/>
            <person name="Shibata K."/>
            <person name="Shiraki T."/>
            <person name="Suzuki S."/>
            <person name="Tagami M."/>
            <person name="Waki K."/>
            <person name="Watahiki A."/>
            <person name="Okamura-Oho Y."/>
            <person name="Suzuki H."/>
            <person name="Kawai J."/>
            <person name="Hayashizaki Y."/>
        </authorList>
    </citation>
    <scope>NUCLEOTIDE SEQUENCE [LARGE SCALE MRNA] (ISOFORM 1)</scope>
    <source>
        <strain>C57BL/6J</strain>
    </source>
</reference>
<reference key="2">
    <citation type="journal article" date="2004" name="Genome Res.">
        <title>The status, quality, and expansion of the NIH full-length cDNA project: the Mammalian Gene Collection (MGC).</title>
        <authorList>
            <consortium name="The MGC Project Team"/>
        </authorList>
    </citation>
    <scope>NUCLEOTIDE SEQUENCE [LARGE SCALE MRNA] (ISOFORMS 2 AND 3)</scope>
    <source>
        <strain>FVB/N</strain>
        <tissue>Limb</tissue>
        <tissue>Mammary tumor</tissue>
    </source>
</reference>
<reference key="3">
    <citation type="journal article" date="2010" name="Cell">
        <title>A tissue-specific atlas of mouse protein phosphorylation and expression.</title>
        <authorList>
            <person name="Huttlin E.L."/>
            <person name="Jedrychowski M.P."/>
            <person name="Elias J.E."/>
            <person name="Goswami T."/>
            <person name="Rad R."/>
            <person name="Beausoleil S.A."/>
            <person name="Villen J."/>
            <person name="Haas W."/>
            <person name="Sowa M.E."/>
            <person name="Gygi S.P."/>
        </authorList>
    </citation>
    <scope>IDENTIFICATION BY MASS SPECTROMETRY [LARGE SCALE ANALYSIS]</scope>
    <source>
        <tissue>Spleen</tissue>
    </source>
</reference>
<accession>Q9CY66</accession>
<accession>Q80X93</accession>
<accession>Q8C6C5</accession>
<accession>Q8VDH0</accession>
<proteinExistence type="evidence at protein level"/>
<sequence length="231" mass="23474">MSFRGGGRGGFNRGGGGGGFNRGGGSNNHFRGGGGGGGGSFRGGGGGGGGSFRGGGRGGFGRGGGRGGFNKFQDQGPPERVVLLGEFMHPCEDDIVCKCTTEENKVPYFNAPVYLENKEQVGKVDEIFGQLRDFYFSVKLSENMKASSFKKLQKFYIDPYKLLPLQRFLPRPPGEKGPPRGGGGGGRGGRGGGRGGGGRGGGRGGGFRGGRGGGGGFRGGRGGGGFRGRGH</sequence>
<evidence type="ECO:0000250" key="1"/>
<evidence type="ECO:0000250" key="2">
    <source>
        <dbReference type="UniProtKB" id="Q9NY12"/>
    </source>
</evidence>
<evidence type="ECO:0000256" key="3">
    <source>
        <dbReference type="SAM" id="MobiDB-lite"/>
    </source>
</evidence>
<evidence type="ECO:0000303" key="4">
    <source>
    </source>
</evidence>
<evidence type="ECO:0000305" key="5"/>
<gene>
    <name type="primary">Gar1</name>
    <name type="synonym">Nola1</name>
</gene>
<name>GAR1_MOUSE</name>
<comment type="function">
    <text evidence="1">Required for ribosome biogenesis and telomere maintenance. Part of the H/ACA small nucleolar ribonucleoprotein (H/ACA snoRNP) complex, which catalyzes pseudouridylation of rRNA. This involves the isomerization of uridine such that the ribose is subsequently attached to C5, instead of the normal N1. Each rRNA can contain up to 100 pseudouridine ('psi') residues, which may serve to stabilize the conformation of rRNAs. May also be required for correct processing or intranuclear trafficking of TERC, the RNA component of the telomerase reverse transcriptase (TERT) holoenzyme (By similarity).</text>
</comment>
<comment type="subunit">
    <text evidence="2">Part of the H/ACA small nucleolar ribonucleoprotein (H/ACA snoRNP) complex, which contains NHP2/NOLA2, GAR1/NOLA1, NOP10/NOLA3, and DKC1/NOLA4, which is presumed to be the catalytic subunit. The complex contains a stable core formed by binding of one or two NOP10-DKC1 heterodimers to NHP2; GAR1 subsequently binds to this core via DKC1. The complex binds a box H/ACA small nucleolar RNA (snoRNA), which may target the specific site of modification within the RNA substrate. The complex also interacts with TERC, which contains a 3'-terminal domain related to the box H/ACA snoRNAs. Specific interactions with snoRNAs or TERC are mediated by GAR1 and NHP2. Associates with NOLC1/NOPP140. H/ACA snoRNPs interact with the SMN complex, consisting of SMN1 or SMN2, GEMIN2/SIP1, DDX20/GEMIN3, and GEMIN4. This is mediated by interaction between GAR1 and SMN1 or SMN2. The SMN complex may be required for correct assembly of the H/ACA snoRNP complex. Component of the telomerase holoenzyme complex composed of one molecule of TERT, one molecule of WRAP53/TCAB1, two molecules of H/ACA ribonucleoprotein complex subunits DKC1, NOP10, NHP2 and GAR1, and a telomerase RNA template component (TERC). The telomerase holoenzyme complex is associated with TEP1, SMG6/EST1A and POT1.</text>
</comment>
<comment type="subcellular location">
    <subcellularLocation>
        <location evidence="1">Nucleus</location>
        <location evidence="1">Nucleolus</location>
    </subcellularLocation>
    <subcellularLocation>
        <location evidence="1">Nucleus</location>
        <location evidence="1">Cajal body</location>
    </subcellularLocation>
    <text evidence="1">Also localized to Cajal bodies (coiled bodies).</text>
</comment>
<comment type="alternative products">
    <event type="alternative splicing"/>
    <isoform>
        <id>Q9CY66-1</id>
        <name>1</name>
        <sequence type="displayed"/>
    </isoform>
    <isoform>
        <id>Q9CY66-2</id>
        <name>2</name>
        <sequence type="described" ref="VSP_011427"/>
    </isoform>
    <isoform>
        <id>Q9CY66-3</id>
        <name>3</name>
        <sequence type="described" ref="VSP_011426 VSP_011427"/>
    </isoform>
</comment>
<comment type="domain">
    <text evidence="1">Interaction with SMN1 requires at least one of the RGG-box regions.</text>
</comment>
<comment type="similarity">
    <text evidence="5">Belongs to the GAR1 family.</text>
</comment>
<keyword id="KW-0025">Alternative splicing</keyword>
<keyword id="KW-1017">Isopeptide bond</keyword>
<keyword id="KW-0539">Nucleus</keyword>
<keyword id="KW-1185">Reference proteome</keyword>
<keyword id="KW-0677">Repeat</keyword>
<keyword id="KW-0687">Ribonucleoprotein</keyword>
<keyword id="KW-0690">Ribosome biogenesis</keyword>
<keyword id="KW-0694">RNA-binding</keyword>
<keyword id="KW-0698">rRNA processing</keyword>
<keyword id="KW-0832">Ubl conjugation</keyword>